<keyword id="KW-0002">3D-structure</keyword>
<keyword id="KW-0521">NADP</keyword>
<keyword id="KW-0547">Nucleotide-binding</keyword>
<keyword id="KW-0560">Oxidoreductase</keyword>
<name>5BPOR_DIGLA</name>
<organism>
    <name type="scientific">Digitalis lanata</name>
    <name type="common">Grecian foxglove</name>
    <dbReference type="NCBI Taxonomy" id="49450"/>
    <lineage>
        <taxon>Eukaryota</taxon>
        <taxon>Viridiplantae</taxon>
        <taxon>Streptophyta</taxon>
        <taxon>Embryophyta</taxon>
        <taxon>Tracheophyta</taxon>
        <taxon>Spermatophyta</taxon>
        <taxon>Magnoliopsida</taxon>
        <taxon>eudicotyledons</taxon>
        <taxon>Gunneridae</taxon>
        <taxon>Pentapetalae</taxon>
        <taxon>asterids</taxon>
        <taxon>lamiids</taxon>
        <taxon>Lamiales</taxon>
        <taxon>Plantaginaceae</taxon>
        <taxon>Digitalideae</taxon>
        <taxon>Digitalis</taxon>
    </lineage>
</organism>
<reference key="1">
    <citation type="journal article" date="2006" name="Phytochemistry">
        <title>Molecular cloning and heterologous expression of progesterone 5beta-reductase from Digitalis lanata Ehrh.</title>
        <authorList>
            <person name="Herl V."/>
            <person name="Fischer G."/>
            <person name="Muller-Uri F."/>
            <person name="Kreis W."/>
        </authorList>
    </citation>
    <scope>NUCLEOTIDE SEQUENCE [GENOMIC DNA / MRNA]</scope>
    <scope>FUNCTION</scope>
    <scope>CATALYTIC ACTIVITY</scope>
    <scope>SUBSTRATE SPECIFICITY</scope>
    <scope>BIOPHYSICOCHEMICAL PROPERTIES</scope>
    <source>
        <tissue>Leaf</tissue>
    </source>
</reference>
<reference key="2">
    <citation type="journal article" date="2008" name="Plant Syst. Evol.">
        <title>Using progesterone 5beta-reductase, a gene encoding a key enzyme in the cardenolide biosynthesis, to infer the phylogeny of the genus Digitalis.</title>
        <authorList>
            <person name="Herl V."/>
            <person name="Albach D.C."/>
            <person name="Mueller-Uri F."/>
            <person name="Braeuchler C."/>
            <person name="Heubl G."/>
            <person name="Kreis W."/>
        </authorList>
        <dbReference type="AGRICOLA" id="IND44043462"/>
    </citation>
    <scope>NUCLEOTIDE SEQUENCE [GENOMIC DNA]</scope>
    <source>
        <tissue>Leaf</tissue>
    </source>
</reference>
<reference key="3">
    <citation type="journal article" date="2008" name="J. Biol. Chem.">
        <title>The crystal structure of progesterone 5beta-reductase from Digitalis lanata defines a novel class of short chain dehydrogenases/reductases.</title>
        <authorList>
            <person name="Thorn A."/>
            <person name="Egerer-Sieber C."/>
            <person name="Jager C.M."/>
            <person name="Herl V."/>
            <person name="Muller-Uri F."/>
            <person name="Kreis W."/>
            <person name="Muller Y.A."/>
        </authorList>
    </citation>
    <scope>X-RAY CRYSTALLOGRAPHY (2.30 ANGSTROMS) OF 26-389 IN COMPLEX WITH NADP</scope>
    <scope>SUBUNIT</scope>
    <scope>FUNCTION</scope>
    <scope>CATALYTIC ACTIVITY</scope>
    <scope>ACTIVE SITES</scope>
    <scope>MUTAGENESIS OF TYR-179</scope>
</reference>
<comment type="function">
    <text evidence="1 2">Involved in cardenolide biosynthesis. Catalyzes the stereospecific conversion of progesterone to 5-beta-pregnane-3,20-dione. Can use progesterone, testosterone, 4-androstene-3,17-dione, cortisol and cortisone as substrates, but not pregnenolone, 21-OH-pregnenolone or isoprogesterone. NADPH could not be replaced by NADH.</text>
</comment>
<comment type="catalytic activity">
    <reaction evidence="1 2">
        <text>5beta-cholestan-3-one + NADP(+) = cholest-4-en-3-one + NADPH + H(+)</text>
        <dbReference type="Rhea" id="RHEA:11524"/>
        <dbReference type="ChEBI" id="CHEBI:15378"/>
        <dbReference type="ChEBI" id="CHEBI:16074"/>
        <dbReference type="ChEBI" id="CHEBI:16175"/>
        <dbReference type="ChEBI" id="CHEBI:57783"/>
        <dbReference type="ChEBI" id="CHEBI:58349"/>
        <dbReference type="EC" id="1.3.1.3"/>
    </reaction>
</comment>
<comment type="catalytic activity">
    <reaction evidence="1 2">
        <text>4,5beta-dihydrocortisone + NADP(+) = cortisone + NADPH + H(+)</text>
        <dbReference type="Rhea" id="RHEA:14037"/>
        <dbReference type="ChEBI" id="CHEBI:15378"/>
        <dbReference type="ChEBI" id="CHEBI:16962"/>
        <dbReference type="ChEBI" id="CHEBI:18093"/>
        <dbReference type="ChEBI" id="CHEBI:57783"/>
        <dbReference type="ChEBI" id="CHEBI:58349"/>
        <dbReference type="EC" id="1.3.1.3"/>
    </reaction>
</comment>
<comment type="biophysicochemical properties">
    <kinetics>
        <KM evidence="1">120 uM for progesterone</KM>
        <KM evidence="1">291 uM for cortisol</KM>
        <KM evidence="1">228 uM for 4-androstene-3,17-dione</KM>
        <KM evidence="1">1.597 mM for cortexone</KM>
        <KM evidence="1">8 uM for NADPH</KM>
        <Vmax evidence="1">45.0 nmol/sec/mg enzyme with progesterone as substrate</Vmax>
        <Vmax evidence="1">81.2 nmol/sec/mg enzyme with cortisol as substrate</Vmax>
        <Vmax evidence="1">18.5 nmol/sec/mg enzyme with 4-androstene-3,17-dione as substrate</Vmax>
        <Vmax evidence="1">63.3 nmol/sec/mg enzyme with cortexone as substrate</Vmax>
        <Vmax evidence="1">31.1 nmol/sec/mg enzyme with NADPH as substrate</Vmax>
    </kinetics>
    <phDependence>
        <text evidence="1">Optimum pH is 7.8.</text>
    </phDependence>
    <temperatureDependence>
        <text evidence="1">Optimum temperature is 40 degrees Celsius.</text>
    </temperatureDependence>
</comment>
<comment type="subunit">
    <text evidence="2">Homodimer.</text>
</comment>
<comment type="similarity">
    <text evidence="3">Belongs to the short-chain dehydrogenases/reductases (SDR) family. Highly divergent.</text>
</comment>
<feature type="chain" id="PRO_0000420239" description="3-oxo-Delta(4,5)-steroid 5-beta-reductase">
    <location>
        <begin position="1"/>
        <end position="389"/>
    </location>
</feature>
<feature type="active site" evidence="2">
    <location>
        <position position="147"/>
    </location>
</feature>
<feature type="active site" evidence="2">
    <location>
        <position position="179"/>
    </location>
</feature>
<feature type="binding site" evidence="2">
    <location>
        <begin position="35"/>
        <end position="37"/>
    </location>
    <ligand>
        <name>NADP(+)</name>
        <dbReference type="ChEBI" id="CHEBI:58349"/>
    </ligand>
</feature>
<feature type="binding site" evidence="2">
    <location>
        <begin position="63"/>
        <end position="64"/>
    </location>
    <ligand>
        <name>NADP(+)</name>
        <dbReference type="ChEBI" id="CHEBI:58349"/>
    </ligand>
</feature>
<feature type="binding site" evidence="2">
    <location>
        <begin position="81"/>
        <end position="82"/>
    </location>
    <ligand>
        <name>NADP(+)</name>
        <dbReference type="ChEBI" id="CHEBI:58349"/>
    </ligand>
</feature>
<feature type="binding site" evidence="2">
    <location>
        <position position="105"/>
    </location>
    <ligand>
        <name>NADP(+)</name>
        <dbReference type="ChEBI" id="CHEBI:58349"/>
    </ligand>
</feature>
<feature type="binding site" evidence="2">
    <location>
        <position position="143"/>
    </location>
    <ligand>
        <name>NADP(+)</name>
        <dbReference type="ChEBI" id="CHEBI:58349"/>
    </ligand>
</feature>
<feature type="binding site" evidence="2">
    <location>
        <position position="179"/>
    </location>
    <ligand>
        <name>NADP(+)</name>
        <dbReference type="ChEBI" id="CHEBI:58349"/>
    </ligand>
</feature>
<feature type="binding site" evidence="2">
    <location>
        <position position="206"/>
    </location>
    <ligand>
        <name>NADP(+)</name>
        <dbReference type="ChEBI" id="CHEBI:58349"/>
    </ligand>
</feature>
<feature type="binding site" evidence="2">
    <location>
        <begin position="213"/>
        <end position="215"/>
    </location>
    <ligand>
        <name>NADP(+)</name>
        <dbReference type="ChEBI" id="CHEBI:58349"/>
    </ligand>
</feature>
<feature type="mutagenesis site" description="Complete loss of activity." evidence="2">
    <original>Y</original>
    <variation>A</variation>
    <variation>F</variation>
    <location>
        <position position="179"/>
    </location>
</feature>
<feature type="strand" evidence="5">
    <location>
        <begin position="27"/>
        <end position="33"/>
    </location>
</feature>
<feature type="helix" evidence="5">
    <location>
        <begin position="37"/>
        <end position="45"/>
    </location>
</feature>
<feature type="strand" evidence="5">
    <location>
        <begin position="55"/>
        <end position="64"/>
    </location>
</feature>
<feature type="strand" evidence="5">
    <location>
        <begin position="76"/>
        <end position="79"/>
    </location>
</feature>
<feature type="helix" evidence="5">
    <location>
        <begin position="85"/>
        <end position="92"/>
    </location>
</feature>
<feature type="strand" evidence="5">
    <location>
        <begin position="100"/>
        <end position="103"/>
    </location>
</feature>
<feature type="helix" evidence="5">
    <location>
        <begin position="112"/>
        <end position="130"/>
    </location>
</feature>
<feature type="turn" evidence="5">
    <location>
        <begin position="131"/>
        <end position="133"/>
    </location>
</feature>
<feature type="strand" evidence="5">
    <location>
        <begin position="139"/>
        <end position="143"/>
    </location>
</feature>
<feature type="helix" evidence="5">
    <location>
        <begin position="147"/>
        <end position="150"/>
    </location>
</feature>
<feature type="helix" evidence="5">
    <location>
        <begin position="153"/>
        <end position="155"/>
    </location>
</feature>
<feature type="turn" evidence="5">
    <location>
        <begin position="156"/>
        <end position="158"/>
    </location>
</feature>
<feature type="strand" evidence="5">
    <location>
        <begin position="164"/>
        <end position="166"/>
    </location>
</feature>
<feature type="strand" evidence="4">
    <location>
        <begin position="168"/>
        <end position="170"/>
    </location>
</feature>
<feature type="helix" evidence="5">
    <location>
        <begin position="178"/>
        <end position="190"/>
    </location>
</feature>
<feature type="strand" evidence="5">
    <location>
        <begin position="197"/>
        <end position="207"/>
    </location>
</feature>
<feature type="helix" evidence="5">
    <location>
        <begin position="217"/>
        <end position="231"/>
    </location>
</feature>
<feature type="helix" evidence="5">
    <location>
        <begin position="241"/>
        <end position="245"/>
    </location>
</feature>
<feature type="helix" evidence="5">
    <location>
        <begin position="253"/>
        <end position="265"/>
    </location>
</feature>
<feature type="helix" evidence="5">
    <location>
        <begin position="267"/>
        <end position="269"/>
    </location>
</feature>
<feature type="strand" evidence="5">
    <location>
        <begin position="272"/>
        <end position="276"/>
    </location>
</feature>
<feature type="helix" evidence="5">
    <location>
        <begin position="284"/>
        <end position="295"/>
    </location>
</feature>
<feature type="strand" evidence="4">
    <location>
        <begin position="304"/>
        <end position="306"/>
    </location>
</feature>
<feature type="helix" evidence="5">
    <location>
        <begin position="310"/>
        <end position="313"/>
    </location>
</feature>
<feature type="turn" evidence="5">
    <location>
        <begin position="314"/>
        <end position="316"/>
    </location>
</feature>
<feature type="helix" evidence="5">
    <location>
        <begin position="318"/>
        <end position="327"/>
    </location>
</feature>
<feature type="helix" evidence="5">
    <location>
        <begin position="335"/>
        <end position="338"/>
    </location>
</feature>
<feature type="helix" evidence="5">
    <location>
        <begin position="341"/>
        <end position="348"/>
    </location>
</feature>
<feature type="helix" evidence="5">
    <location>
        <begin position="358"/>
        <end position="362"/>
    </location>
</feature>
<feature type="helix" evidence="5">
    <location>
        <begin position="371"/>
        <end position="384"/>
    </location>
</feature>
<accession>Q6PQJ9</accession>
<proteinExistence type="evidence at protein level"/>
<evidence type="ECO:0000269" key="1">
    <source>
    </source>
</evidence>
<evidence type="ECO:0000269" key="2">
    <source>
    </source>
</evidence>
<evidence type="ECO:0000305" key="3"/>
<evidence type="ECO:0007829" key="4">
    <source>
        <dbReference type="PDB" id="2V6F"/>
    </source>
</evidence>
<evidence type="ECO:0007829" key="5">
    <source>
        <dbReference type="PDB" id="2V6G"/>
    </source>
</evidence>
<protein>
    <recommendedName>
        <fullName>3-oxo-Delta(4,5)-steroid 5-beta-reductase</fullName>
        <ecNumber evidence="1 2">1.3.1.3</ecNumber>
    </recommendedName>
    <alternativeName>
        <fullName>Delta(4)-3-oxosteroid 5-beta-reductase</fullName>
    </alternativeName>
    <alternativeName>
        <fullName>Delta-4,5-steroid 5-beta-reductase</fullName>
        <shortName>At5beta-StR</shortName>
    </alternativeName>
    <alternativeName>
        <fullName>Progesterone 5-beta-reductase</fullName>
        <shortName>5beta-POR</shortName>
    </alternativeName>
</protein>
<dbReference type="EC" id="1.3.1.3" evidence="1 2"/>
<dbReference type="EMBL" id="AY574950">
    <property type="protein sequence ID" value="AAS76634.1"/>
    <property type="molecule type" value="mRNA"/>
</dbReference>
<dbReference type="EMBL" id="AY585867">
    <property type="protein sequence ID" value="AAS93804.1"/>
    <property type="molecule type" value="Genomic_DNA"/>
</dbReference>
<dbReference type="PDB" id="2V6F">
    <property type="method" value="X-ray"/>
    <property type="resolution" value="2.40 A"/>
    <property type="chains" value="A=26-389"/>
</dbReference>
<dbReference type="PDB" id="2V6G">
    <property type="method" value="X-ray"/>
    <property type="resolution" value="2.30 A"/>
    <property type="chains" value="A=26-389"/>
</dbReference>
<dbReference type="PDBsum" id="2V6F"/>
<dbReference type="PDBsum" id="2V6G"/>
<dbReference type="SMR" id="Q6PQJ9"/>
<dbReference type="BioCyc" id="MetaCyc:MONOMER-14261"/>
<dbReference type="BRENDA" id="1.3.1.3">
    <property type="organism ID" value="1947"/>
</dbReference>
<dbReference type="EvolutionaryTrace" id="Q6PQJ9"/>
<dbReference type="GO" id="GO:0047787">
    <property type="term" value="F:Delta4-3-oxosteroid 5beta-reductase activity"/>
    <property type="evidence" value="ECO:0007669"/>
    <property type="project" value="UniProtKB-EC"/>
</dbReference>
<dbReference type="GO" id="GO:0000166">
    <property type="term" value="F:nucleotide binding"/>
    <property type="evidence" value="ECO:0007669"/>
    <property type="project" value="UniProtKB-KW"/>
</dbReference>
<dbReference type="CDD" id="cd08948">
    <property type="entry name" value="5beta-POR_like_SDR_a"/>
    <property type="match status" value="1"/>
</dbReference>
<dbReference type="FunFam" id="3.40.50.720:FF:000808">
    <property type="entry name" value="Iridoid synthase"/>
    <property type="match status" value="1"/>
</dbReference>
<dbReference type="Gene3D" id="3.40.50.720">
    <property type="entry name" value="NAD(P)-binding Rossmann-like Domain"/>
    <property type="match status" value="1"/>
</dbReference>
<dbReference type="InterPro" id="IPR036291">
    <property type="entry name" value="NAD(P)-bd_dom_sf"/>
</dbReference>
<dbReference type="InterPro" id="IPR055222">
    <property type="entry name" value="PRISE-like_Rossmann-fold"/>
</dbReference>
<dbReference type="PANTHER" id="PTHR32487">
    <property type="entry name" value="3-OXO-DELTA(4,5)-STEROID 5-BETA-REDUCTASE"/>
    <property type="match status" value="1"/>
</dbReference>
<dbReference type="PANTHER" id="PTHR32487:SF0">
    <property type="entry name" value="3-OXO-DELTA(4,5)-STEROID 5-BETA-REDUCTASE"/>
    <property type="match status" value="1"/>
</dbReference>
<dbReference type="Pfam" id="PF22917">
    <property type="entry name" value="PRISE"/>
    <property type="match status" value="1"/>
</dbReference>
<dbReference type="SUPFAM" id="SSF51735">
    <property type="entry name" value="NAD(P)-binding Rossmann-fold domains"/>
    <property type="match status" value="1"/>
</dbReference>
<sequence>MSWWWAGAIGAAKKRLEEDDAQPKHSSVALIVGVTGIIGNSLAEILPLADTPGGPWKVYGVARRTRPAWHEDNPINYVQCDISDPDDSQAKLSPLTDVTHVFYVTWANRSTEQENCEANSKMFRNVLDAVIPNCPNLKHISLQTGRKHYMGPFESYGKIESHDPPYTEDLPRLKYMNFYYDLEDIMLEEVEKKEGLTWSVHRPGNIFGFSPYSMMNLVGTLCVYAAICKHEGKVLRFTGCKAAWDGYSDCSDADLIAEHHIWAAVDPYAKNEAFNVSNGDVFKWKHFWKVLAEQFGVGCGEYEEGVDLKLQDLMKGKEPVWEEIVRENGLTPTKLKDVGIWWFGDVILGNECFLDSMNKSKEHGFLGFRNSKNAFISWIDKAKAYKIVP</sequence>